<keyword id="KW-1185">Reference proteome</keyword>
<keyword id="KW-0687">Ribonucleoprotein</keyword>
<keyword id="KW-0689">Ribosomal protein</keyword>
<keyword id="KW-0694">RNA-binding</keyword>
<keyword id="KW-0699">rRNA-binding</keyword>
<organism>
    <name type="scientific">Saccharolobus solfataricus (strain ATCC 35092 / DSM 1617 / JCM 11322 / P2)</name>
    <name type="common">Sulfolobus solfataricus</name>
    <dbReference type="NCBI Taxonomy" id="273057"/>
    <lineage>
        <taxon>Archaea</taxon>
        <taxon>Thermoproteota</taxon>
        <taxon>Thermoprotei</taxon>
        <taxon>Sulfolobales</taxon>
        <taxon>Sulfolobaceae</taxon>
        <taxon>Saccharolobus</taxon>
    </lineage>
</organism>
<accession>Q9UXA6</accession>
<name>RL4_SACS2</name>
<gene>
    <name evidence="1" type="primary">rpl4</name>
    <name type="ordered locus">SSO0718</name>
    <name type="ORF">C10_013</name>
</gene>
<evidence type="ECO:0000255" key="1">
    <source>
        <dbReference type="HAMAP-Rule" id="MF_01328"/>
    </source>
</evidence>
<evidence type="ECO:0000305" key="2"/>
<dbReference type="EMBL" id="Y18930">
    <property type="protein sequence ID" value="CAB57586.1"/>
    <property type="molecule type" value="Genomic_DNA"/>
</dbReference>
<dbReference type="EMBL" id="AE006641">
    <property type="protein sequence ID" value="AAK41017.1"/>
    <property type="molecule type" value="Genomic_DNA"/>
</dbReference>
<dbReference type="PIR" id="B99220">
    <property type="entry name" value="B99220"/>
</dbReference>
<dbReference type="SMR" id="Q9UXA6"/>
<dbReference type="FunCoup" id="Q9UXA6">
    <property type="interactions" value="235"/>
</dbReference>
<dbReference type="STRING" id="273057.SSO0718"/>
<dbReference type="PaxDb" id="273057-SSO0718"/>
<dbReference type="EnsemblBacteria" id="AAK41017">
    <property type="protein sequence ID" value="AAK41017"/>
    <property type="gene ID" value="SSO0718"/>
</dbReference>
<dbReference type="KEGG" id="sso:SSO0718"/>
<dbReference type="PATRIC" id="fig|273057.12.peg.717"/>
<dbReference type="eggNOG" id="arCOG04071">
    <property type="taxonomic scope" value="Archaea"/>
</dbReference>
<dbReference type="HOGENOM" id="CLU_026535_0_0_2"/>
<dbReference type="InParanoid" id="Q9UXA6"/>
<dbReference type="PhylomeDB" id="Q9UXA6"/>
<dbReference type="Proteomes" id="UP000001974">
    <property type="component" value="Chromosome"/>
</dbReference>
<dbReference type="GO" id="GO:0022625">
    <property type="term" value="C:cytosolic large ribosomal subunit"/>
    <property type="evidence" value="ECO:0000318"/>
    <property type="project" value="GO_Central"/>
</dbReference>
<dbReference type="GO" id="GO:0003723">
    <property type="term" value="F:RNA binding"/>
    <property type="evidence" value="ECO:0000318"/>
    <property type="project" value="GO_Central"/>
</dbReference>
<dbReference type="GO" id="GO:0019843">
    <property type="term" value="F:rRNA binding"/>
    <property type="evidence" value="ECO:0007669"/>
    <property type="project" value="UniProtKB-UniRule"/>
</dbReference>
<dbReference type="GO" id="GO:0003735">
    <property type="term" value="F:structural constituent of ribosome"/>
    <property type="evidence" value="ECO:0000318"/>
    <property type="project" value="GO_Central"/>
</dbReference>
<dbReference type="GO" id="GO:0006412">
    <property type="term" value="P:translation"/>
    <property type="evidence" value="ECO:0007669"/>
    <property type="project" value="UniProtKB-UniRule"/>
</dbReference>
<dbReference type="FunFam" id="3.40.1370.10:FF:000011">
    <property type="entry name" value="50S ribosomal protein L4"/>
    <property type="match status" value="1"/>
</dbReference>
<dbReference type="Gene3D" id="3.40.1370.10">
    <property type="match status" value="1"/>
</dbReference>
<dbReference type="HAMAP" id="MF_01328_A">
    <property type="entry name" value="Ribosomal_uL4_A"/>
    <property type="match status" value="1"/>
</dbReference>
<dbReference type="InterPro" id="IPR002136">
    <property type="entry name" value="Ribosomal_uL4"/>
</dbReference>
<dbReference type="InterPro" id="IPR023574">
    <property type="entry name" value="Ribosomal_uL4_dom_sf"/>
</dbReference>
<dbReference type="InterPro" id="IPR013000">
    <property type="entry name" value="Ribosomal_uL4_euk/arc_CS"/>
</dbReference>
<dbReference type="InterPro" id="IPR045240">
    <property type="entry name" value="Ribosomal_uL4_euk/arch"/>
</dbReference>
<dbReference type="InterPro" id="IPR019970">
    <property type="entry name" value="Ribosomall_uL4-arc"/>
</dbReference>
<dbReference type="NCBIfam" id="TIGR03672">
    <property type="entry name" value="rpl4p_arch"/>
    <property type="match status" value="1"/>
</dbReference>
<dbReference type="PANTHER" id="PTHR19431">
    <property type="entry name" value="60S RIBOSOMAL PROTEIN L4"/>
    <property type="match status" value="1"/>
</dbReference>
<dbReference type="Pfam" id="PF00573">
    <property type="entry name" value="Ribosomal_L4"/>
    <property type="match status" value="1"/>
</dbReference>
<dbReference type="SUPFAM" id="SSF52166">
    <property type="entry name" value="Ribosomal protein L4"/>
    <property type="match status" value="1"/>
</dbReference>
<dbReference type="PROSITE" id="PS00939">
    <property type="entry name" value="RIBOSOMAL_L1E"/>
    <property type="match status" value="1"/>
</dbReference>
<protein>
    <recommendedName>
        <fullName evidence="1">Large ribosomal subunit protein uL4</fullName>
    </recommendedName>
    <alternativeName>
        <fullName evidence="2">50S ribosomal protein L4</fullName>
    </alternativeName>
</protein>
<reference key="1">
    <citation type="journal article" date="2000" name="Genome">
        <title>Gene content and organization of a 281-kbp contig from the genome of the extremely thermophilic archaeon, Sulfolobus solfataricus P2.</title>
        <authorList>
            <person name="Charlebois R.L."/>
            <person name="Singh R.K."/>
            <person name="Chan-Weiher C.C.-Y."/>
            <person name="Allard G."/>
            <person name="Chow C."/>
            <person name="Confalonieri F."/>
            <person name="Curtis B."/>
            <person name="Duguet M."/>
            <person name="Erauso G."/>
            <person name="Faguy D."/>
            <person name="Gaasterland T."/>
            <person name="Garrett R.A."/>
            <person name="Gordon P."/>
            <person name="Jeffries A.C."/>
            <person name="Kozera C."/>
            <person name="Kushwaha N."/>
            <person name="Lafleur E."/>
            <person name="Medina N."/>
            <person name="Peng X."/>
            <person name="Penny S.L."/>
            <person name="She Q."/>
            <person name="St Jean A."/>
            <person name="van der Oost J."/>
            <person name="Young F."/>
            <person name="Zivanovic Y."/>
            <person name="Doolittle W.F."/>
            <person name="Ragan M.A."/>
            <person name="Sensen C.W."/>
        </authorList>
    </citation>
    <scope>NUCLEOTIDE SEQUENCE [LARGE SCALE GENOMIC DNA]</scope>
    <source>
        <strain>ATCC 35092 / DSM 1617 / JCM 11322 / P2</strain>
    </source>
</reference>
<reference key="2">
    <citation type="journal article" date="2001" name="Proc. Natl. Acad. Sci. U.S.A.">
        <title>The complete genome of the crenarchaeon Sulfolobus solfataricus P2.</title>
        <authorList>
            <person name="She Q."/>
            <person name="Singh R.K."/>
            <person name="Confalonieri F."/>
            <person name="Zivanovic Y."/>
            <person name="Allard G."/>
            <person name="Awayez M.J."/>
            <person name="Chan-Weiher C.C.-Y."/>
            <person name="Clausen I.G."/>
            <person name="Curtis B.A."/>
            <person name="De Moors A."/>
            <person name="Erauso G."/>
            <person name="Fletcher C."/>
            <person name="Gordon P.M.K."/>
            <person name="Heikamp-de Jong I."/>
            <person name="Jeffries A.C."/>
            <person name="Kozera C.J."/>
            <person name="Medina N."/>
            <person name="Peng X."/>
            <person name="Thi-Ngoc H.P."/>
            <person name="Redder P."/>
            <person name="Schenk M.E."/>
            <person name="Theriault C."/>
            <person name="Tolstrup N."/>
            <person name="Charlebois R.L."/>
            <person name="Doolittle W.F."/>
            <person name="Duguet M."/>
            <person name="Gaasterland T."/>
            <person name="Garrett R.A."/>
            <person name="Ragan M.A."/>
            <person name="Sensen C.W."/>
            <person name="Van der Oost J."/>
        </authorList>
    </citation>
    <scope>NUCLEOTIDE SEQUENCE [LARGE SCALE GENOMIC DNA]</scope>
    <source>
        <strain>ATCC 35092 / DSM 1617 / JCM 11322 / P2</strain>
    </source>
</reference>
<feature type="chain" id="PRO_0000129344" description="Large ribosomal subunit protein uL4">
    <location>
        <begin position="1"/>
        <end position="267"/>
    </location>
</feature>
<proteinExistence type="inferred from homology"/>
<sequence length="267" mass="29534">MYLELVKKKSDILDKDGNRIKEVELPIIFSFPVRKDLIRRVFIAEFTHSLQPKGRDPNAGKRTSAESFGINLGMARVPRVKNSGEAALAPNTVGGRLAFPPSVNKKLAEEANVKEKRLAVISALSATADIAFVRARGHVFKDSVRFPIVVTDDIVNLKTTSEVEEFLKKIGVYDDVERVKERIRIRAGKGKMRGRKYKEPIGPLIIVHDSNSPIIKAARNLAGVDVVNAKDVSVIHLAPGAHPGRLTIYTESSIKILDERLSKRVVS</sequence>
<comment type="function">
    <text evidence="1">One of the primary rRNA binding proteins, this protein initially binds near the 5'-end of the 23S rRNA. It is important during the early stages of 50S assembly. It makes multiple contacts with different domains of the 23S rRNA in the assembled 50S subunit and ribosome.</text>
</comment>
<comment type="function">
    <text evidence="1">Forms part of the polypeptide exit tunnel.</text>
</comment>
<comment type="subunit">
    <text evidence="1">Part of the 50S ribosomal subunit.</text>
</comment>
<comment type="similarity">
    <text evidence="1">Belongs to the universal ribosomal protein uL4 family.</text>
</comment>